<comment type="function">
    <text evidence="3 4 5">Catalyzes the addition of GlcNAc or GlcUA monosaccharides to the nascent hyaluronan polymer. Therefore, it is essential to hyaluronan synthesis a major component of most extracellular matrices that has a structural role in tissues architectures and regulates cell adhesion, migration and differentiation. This is one of three isoenzymes responsible for cellular hyaluronan synthesis.</text>
</comment>
<comment type="catalytic activity">
    <reaction evidence="3 4 5">
        <text>[hyaluronan](n) + UDP-N-acetyl-alpha-D-glucosamine = N-acetyl-beta-D-glucosaminyl-(1-&gt;4)-[hyaluronan](n) + UDP + H(+)</text>
        <dbReference type="Rhea" id="RHEA:20465"/>
        <dbReference type="Rhea" id="RHEA-COMP:12583"/>
        <dbReference type="Rhea" id="RHEA-COMP:12585"/>
        <dbReference type="ChEBI" id="CHEBI:15378"/>
        <dbReference type="ChEBI" id="CHEBI:57705"/>
        <dbReference type="ChEBI" id="CHEBI:58223"/>
        <dbReference type="ChEBI" id="CHEBI:132153"/>
        <dbReference type="ChEBI" id="CHEBI:132154"/>
        <dbReference type="EC" id="2.4.1.212"/>
    </reaction>
    <physiologicalReaction direction="left-to-right" evidence="5">
        <dbReference type="Rhea" id="RHEA:20466"/>
    </physiologicalReaction>
</comment>
<comment type="catalytic activity">
    <reaction evidence="3 4 5">
        <text>N-acetyl-beta-D-glucosaminyl-(1-&gt;4)-[hyaluronan](n) + UDP-alpha-D-glucuronate = [hyaluronan](n+1) + UDP + H(+)</text>
        <dbReference type="Rhea" id="RHEA:12528"/>
        <dbReference type="Rhea" id="RHEA-COMP:12585"/>
        <dbReference type="Rhea" id="RHEA-COMP:12587"/>
        <dbReference type="ChEBI" id="CHEBI:15378"/>
        <dbReference type="ChEBI" id="CHEBI:58052"/>
        <dbReference type="ChEBI" id="CHEBI:58223"/>
        <dbReference type="ChEBI" id="CHEBI:132153"/>
        <dbReference type="ChEBI" id="CHEBI:132154"/>
        <dbReference type="EC" id="2.4.1.212"/>
    </reaction>
    <physiologicalReaction direction="left-to-right" evidence="5">
        <dbReference type="Rhea" id="RHEA:12529"/>
    </physiologicalReaction>
</comment>
<comment type="cofactor">
    <cofactor>
        <name>Mg(2+)</name>
        <dbReference type="ChEBI" id="CHEBI:18420"/>
    </cofactor>
</comment>
<comment type="activity regulation">
    <text evidence="3 5">The enzymatic activity depends on the availability of cytosolic levels of UDP-GlcUA and UDP-GlcNAc.</text>
</comment>
<comment type="pathway">
    <text evidence="3">Glycan biosynthesis; hyaluronan biosynthesis.</text>
</comment>
<comment type="subunit">
    <text evidence="4">Homodimers (PubMed:25795779). Forms heterodimers with HAS2 and HAS1 (PubMed:25795779).</text>
</comment>
<comment type="interaction">
    <interactant intactId="EBI-16628799">
        <id>O00219</id>
    </interactant>
    <interactant intactId="EBI-1052423">
        <id>Q92839</id>
        <label>HAS1</label>
    </interactant>
    <organismsDiffer>false</organismsDiffer>
    <experiments>9</experiments>
</comment>
<comment type="interaction">
    <interactant intactId="EBI-16628799">
        <id>O00219</id>
    </interactant>
    <interactant intactId="EBI-16628852">
        <id>Q92819</id>
        <label>HAS2</label>
    </interactant>
    <organismsDiffer>false</organismsDiffer>
    <experiments>10</experiments>
</comment>
<comment type="interaction">
    <interactant intactId="EBI-16628799">
        <id>O00219</id>
    </interactant>
    <interactant intactId="EBI-16628799">
        <id>O00219</id>
        <label>HAS3</label>
    </interactant>
    <organismsDiffer>false</organismsDiffer>
    <experiments>10</experiments>
</comment>
<comment type="interaction">
    <interactant intactId="EBI-17186025">
        <id>O00219-2</id>
    </interactant>
    <interactant intactId="EBI-11976321">
        <id>O95236-2</id>
        <label>APOL3</label>
    </interactant>
    <organismsDiffer>false</organismsDiffer>
    <experiments>3</experiments>
</comment>
<comment type="interaction">
    <interactant intactId="EBI-17186025">
        <id>O00219-2</id>
    </interactant>
    <interactant intactId="EBI-2807956">
        <id>Q96FZ5</id>
        <label>CMTM7</label>
    </interactant>
    <organismsDiffer>false</organismsDiffer>
    <experiments>3</experiments>
</comment>
<comment type="interaction">
    <interactant intactId="EBI-17186025">
        <id>O00219-2</id>
    </interactant>
    <interactant intactId="EBI-2820517">
        <id>Q8TAF8</id>
        <label>LHFPL5</label>
    </interactant>
    <organismsDiffer>false</organismsDiffer>
    <experiments>3</experiments>
</comment>
<comment type="interaction">
    <interactant intactId="EBI-17186025">
        <id>O00219-2</id>
    </interactant>
    <interactant intactId="EBI-12051377">
        <id>Q8N912</id>
        <label>NRAC</label>
    </interactant>
    <organismsDiffer>false</organismsDiffer>
    <experiments>3</experiments>
</comment>
<comment type="interaction">
    <interactant intactId="EBI-17186025">
        <id>O00219-2</id>
    </interactant>
    <interactant intactId="EBI-12188331">
        <id>P60201-2</id>
        <label>PLP1</label>
    </interactant>
    <organismsDiffer>false</organismsDiffer>
    <experiments>3</experiments>
</comment>
<comment type="interaction">
    <interactant intactId="EBI-17186025">
        <id>O00219-2</id>
    </interactant>
    <interactant intactId="EBI-12187159">
        <id>O43759-2</id>
        <label>SYNGR1</label>
    </interactant>
    <organismsDiffer>false</organismsDiffer>
    <experiments>3</experiments>
</comment>
<comment type="subcellular location">
    <subcellularLocation>
        <location evidence="4 5 6">Cell membrane</location>
        <topology evidence="2">Multi-pass membrane protein</topology>
    </subcellularLocation>
    <subcellularLocation>
        <location evidence="4">Golgi apparatus membrane</location>
        <topology>Multi-pass membrane protein</topology>
    </subcellularLocation>
    <subcellularLocation>
        <location evidence="1">Golgi apparatus</location>
        <location evidence="1">trans-Golgi network membrane</location>
        <topology evidence="2">Multi-pass membrane protein</topology>
    </subcellularLocation>
    <subcellularLocation>
        <location evidence="5">Early endosome</location>
    </subcellularLocation>
    <text evidence="1 5">Travels from endoplasmic reticulum (ER), Golgi to plasma membrane (PubMed:26883802). Actives only when present in plasma membrane (By similarity). O-GlcNAcylation controls its membrane localization (PubMed:26883802). A rapid recycling of HAS3 between plasma membrane and endosomes is controlled by the cytosolic levels of UDP-GlcUA and UDP-GlcNAc (PubMed:26883802).</text>
</comment>
<comment type="alternative products">
    <event type="alternative splicing"/>
    <isoform>
        <id>O00219-1</id>
        <name>1</name>
        <sequence type="displayed"/>
    </isoform>
    <isoform>
        <id>O00219-2</id>
        <name>2</name>
        <sequence type="described" ref="VSP_042022"/>
    </isoform>
</comment>
<comment type="PTM">
    <text evidence="5">O-GlcNAcylation increases the hyaluronan synthase activity, HAS3 stability and its plasma membrane residence. The concentration of UDP-GlcNAc controls the level of O-GlcNAc modification.</text>
</comment>
<comment type="similarity">
    <text evidence="8">Belongs to the NodC/HAS family.</text>
</comment>
<accession>O00219</accession>
<accession>A8K5T5</accession>
<accession>Q8WTZ0</accession>
<accession>Q9NYP0</accession>
<reference key="1">
    <citation type="submission" date="2000-02" db="EMBL/GenBank/DDBJ databases">
        <title>Molecular characterization of hyaluronan synthase 3.</title>
        <authorList>
            <person name="Spicer A.P."/>
        </authorList>
    </citation>
    <scope>NUCLEOTIDE SEQUENCE [MRNA] (ISOFORM 1)</scope>
</reference>
<reference key="2">
    <citation type="journal article" date="2004" name="Nat. Genet.">
        <title>Complete sequencing and characterization of 21,243 full-length human cDNAs.</title>
        <authorList>
            <person name="Ota T."/>
            <person name="Suzuki Y."/>
            <person name="Nishikawa T."/>
            <person name="Otsuki T."/>
            <person name="Sugiyama T."/>
            <person name="Irie R."/>
            <person name="Wakamatsu A."/>
            <person name="Hayashi K."/>
            <person name="Sato H."/>
            <person name="Nagai K."/>
            <person name="Kimura K."/>
            <person name="Makita H."/>
            <person name="Sekine M."/>
            <person name="Obayashi M."/>
            <person name="Nishi T."/>
            <person name="Shibahara T."/>
            <person name="Tanaka T."/>
            <person name="Ishii S."/>
            <person name="Yamamoto J."/>
            <person name="Saito K."/>
            <person name="Kawai Y."/>
            <person name="Isono Y."/>
            <person name="Nakamura Y."/>
            <person name="Nagahari K."/>
            <person name="Murakami K."/>
            <person name="Yasuda T."/>
            <person name="Iwayanagi T."/>
            <person name="Wagatsuma M."/>
            <person name="Shiratori A."/>
            <person name="Sudo H."/>
            <person name="Hosoiri T."/>
            <person name="Kaku Y."/>
            <person name="Kodaira H."/>
            <person name="Kondo H."/>
            <person name="Sugawara M."/>
            <person name="Takahashi M."/>
            <person name="Kanda K."/>
            <person name="Yokoi T."/>
            <person name="Furuya T."/>
            <person name="Kikkawa E."/>
            <person name="Omura Y."/>
            <person name="Abe K."/>
            <person name="Kamihara K."/>
            <person name="Katsuta N."/>
            <person name="Sato K."/>
            <person name="Tanikawa M."/>
            <person name="Yamazaki M."/>
            <person name="Ninomiya K."/>
            <person name="Ishibashi T."/>
            <person name="Yamashita H."/>
            <person name="Murakawa K."/>
            <person name="Fujimori K."/>
            <person name="Tanai H."/>
            <person name="Kimata M."/>
            <person name="Watanabe M."/>
            <person name="Hiraoka S."/>
            <person name="Chiba Y."/>
            <person name="Ishida S."/>
            <person name="Ono Y."/>
            <person name="Takiguchi S."/>
            <person name="Watanabe S."/>
            <person name="Yosida M."/>
            <person name="Hotuta T."/>
            <person name="Kusano J."/>
            <person name="Kanehori K."/>
            <person name="Takahashi-Fujii A."/>
            <person name="Hara H."/>
            <person name="Tanase T.-O."/>
            <person name="Nomura Y."/>
            <person name="Togiya S."/>
            <person name="Komai F."/>
            <person name="Hara R."/>
            <person name="Takeuchi K."/>
            <person name="Arita M."/>
            <person name="Imose N."/>
            <person name="Musashino K."/>
            <person name="Yuuki H."/>
            <person name="Oshima A."/>
            <person name="Sasaki N."/>
            <person name="Aotsuka S."/>
            <person name="Yoshikawa Y."/>
            <person name="Matsunawa H."/>
            <person name="Ichihara T."/>
            <person name="Shiohata N."/>
            <person name="Sano S."/>
            <person name="Moriya S."/>
            <person name="Momiyama H."/>
            <person name="Satoh N."/>
            <person name="Takami S."/>
            <person name="Terashima Y."/>
            <person name="Suzuki O."/>
            <person name="Nakagawa S."/>
            <person name="Senoh A."/>
            <person name="Mizoguchi H."/>
            <person name="Goto Y."/>
            <person name="Shimizu F."/>
            <person name="Wakebe H."/>
            <person name="Hishigaki H."/>
            <person name="Watanabe T."/>
            <person name="Sugiyama A."/>
            <person name="Takemoto M."/>
            <person name="Kawakami B."/>
            <person name="Yamazaki M."/>
            <person name="Watanabe K."/>
            <person name="Kumagai A."/>
            <person name="Itakura S."/>
            <person name="Fukuzumi Y."/>
            <person name="Fujimori Y."/>
            <person name="Komiyama M."/>
            <person name="Tashiro H."/>
            <person name="Tanigami A."/>
            <person name="Fujiwara T."/>
            <person name="Ono T."/>
            <person name="Yamada K."/>
            <person name="Fujii Y."/>
            <person name="Ozaki K."/>
            <person name="Hirao M."/>
            <person name="Ohmori Y."/>
            <person name="Kawabata A."/>
            <person name="Hikiji T."/>
            <person name="Kobatake N."/>
            <person name="Inagaki H."/>
            <person name="Ikema Y."/>
            <person name="Okamoto S."/>
            <person name="Okitani R."/>
            <person name="Kawakami T."/>
            <person name="Noguchi S."/>
            <person name="Itoh T."/>
            <person name="Shigeta K."/>
            <person name="Senba T."/>
            <person name="Matsumura K."/>
            <person name="Nakajima Y."/>
            <person name="Mizuno T."/>
            <person name="Morinaga M."/>
            <person name="Sasaki M."/>
            <person name="Togashi T."/>
            <person name="Oyama M."/>
            <person name="Hata H."/>
            <person name="Watanabe M."/>
            <person name="Komatsu T."/>
            <person name="Mizushima-Sugano J."/>
            <person name="Satoh T."/>
            <person name="Shirai Y."/>
            <person name="Takahashi Y."/>
            <person name="Nakagawa K."/>
            <person name="Okumura K."/>
            <person name="Nagase T."/>
            <person name="Nomura N."/>
            <person name="Kikuchi H."/>
            <person name="Masuho Y."/>
            <person name="Yamashita R."/>
            <person name="Nakai K."/>
            <person name="Yada T."/>
            <person name="Nakamura Y."/>
            <person name="Ohara O."/>
            <person name="Isogai T."/>
            <person name="Sugano S."/>
        </authorList>
    </citation>
    <scope>NUCLEOTIDE SEQUENCE [LARGE SCALE MRNA] (ISOFORM 1)</scope>
    <source>
        <tissue>Brain</tissue>
    </source>
</reference>
<reference key="3">
    <citation type="journal article" date="2004" name="Nature">
        <title>The sequence and analysis of duplication-rich human chromosome 16.</title>
        <authorList>
            <person name="Martin J."/>
            <person name="Han C."/>
            <person name="Gordon L.A."/>
            <person name="Terry A."/>
            <person name="Prabhakar S."/>
            <person name="She X."/>
            <person name="Xie G."/>
            <person name="Hellsten U."/>
            <person name="Chan Y.M."/>
            <person name="Altherr M."/>
            <person name="Couronne O."/>
            <person name="Aerts A."/>
            <person name="Bajorek E."/>
            <person name="Black S."/>
            <person name="Blumer H."/>
            <person name="Branscomb E."/>
            <person name="Brown N.C."/>
            <person name="Bruno W.J."/>
            <person name="Buckingham J.M."/>
            <person name="Callen D.F."/>
            <person name="Campbell C.S."/>
            <person name="Campbell M.L."/>
            <person name="Campbell E.W."/>
            <person name="Caoile C."/>
            <person name="Challacombe J.F."/>
            <person name="Chasteen L.A."/>
            <person name="Chertkov O."/>
            <person name="Chi H.C."/>
            <person name="Christensen M."/>
            <person name="Clark L.M."/>
            <person name="Cohn J.D."/>
            <person name="Denys M."/>
            <person name="Detter J.C."/>
            <person name="Dickson M."/>
            <person name="Dimitrijevic-Bussod M."/>
            <person name="Escobar J."/>
            <person name="Fawcett J.J."/>
            <person name="Flowers D."/>
            <person name="Fotopulos D."/>
            <person name="Glavina T."/>
            <person name="Gomez M."/>
            <person name="Gonzales E."/>
            <person name="Goodstein D."/>
            <person name="Goodwin L.A."/>
            <person name="Grady D.L."/>
            <person name="Grigoriev I."/>
            <person name="Groza M."/>
            <person name="Hammon N."/>
            <person name="Hawkins T."/>
            <person name="Haydu L."/>
            <person name="Hildebrand C.E."/>
            <person name="Huang W."/>
            <person name="Israni S."/>
            <person name="Jett J."/>
            <person name="Jewett P.B."/>
            <person name="Kadner K."/>
            <person name="Kimball H."/>
            <person name="Kobayashi A."/>
            <person name="Krawczyk M.-C."/>
            <person name="Leyba T."/>
            <person name="Longmire J.L."/>
            <person name="Lopez F."/>
            <person name="Lou Y."/>
            <person name="Lowry S."/>
            <person name="Ludeman T."/>
            <person name="Manohar C.F."/>
            <person name="Mark G.A."/>
            <person name="McMurray K.L."/>
            <person name="Meincke L.J."/>
            <person name="Morgan J."/>
            <person name="Moyzis R.K."/>
            <person name="Mundt M.O."/>
            <person name="Munk A.C."/>
            <person name="Nandkeshwar R.D."/>
            <person name="Pitluck S."/>
            <person name="Pollard M."/>
            <person name="Predki P."/>
            <person name="Parson-Quintana B."/>
            <person name="Ramirez L."/>
            <person name="Rash S."/>
            <person name="Retterer J."/>
            <person name="Ricke D.O."/>
            <person name="Robinson D.L."/>
            <person name="Rodriguez A."/>
            <person name="Salamov A."/>
            <person name="Saunders E.H."/>
            <person name="Scott D."/>
            <person name="Shough T."/>
            <person name="Stallings R.L."/>
            <person name="Stalvey M."/>
            <person name="Sutherland R.D."/>
            <person name="Tapia R."/>
            <person name="Tesmer J.G."/>
            <person name="Thayer N."/>
            <person name="Thompson L.S."/>
            <person name="Tice H."/>
            <person name="Torney D.C."/>
            <person name="Tran-Gyamfi M."/>
            <person name="Tsai M."/>
            <person name="Ulanovsky L.E."/>
            <person name="Ustaszewska A."/>
            <person name="Vo N."/>
            <person name="White P.S."/>
            <person name="Williams A.L."/>
            <person name="Wills P.L."/>
            <person name="Wu J.-R."/>
            <person name="Wu K."/>
            <person name="Yang J."/>
            <person name="DeJong P."/>
            <person name="Bruce D."/>
            <person name="Doggett N.A."/>
            <person name="Deaven L."/>
            <person name="Schmutz J."/>
            <person name="Grimwood J."/>
            <person name="Richardson P."/>
            <person name="Rokhsar D.S."/>
            <person name="Eichler E.E."/>
            <person name="Gilna P."/>
            <person name="Lucas S.M."/>
            <person name="Myers R.M."/>
            <person name="Rubin E.M."/>
            <person name="Pennacchio L.A."/>
        </authorList>
    </citation>
    <scope>NUCLEOTIDE SEQUENCE [LARGE SCALE GENOMIC DNA]</scope>
</reference>
<reference key="4">
    <citation type="submission" date="2005-07" db="EMBL/GenBank/DDBJ databases">
        <authorList>
            <person name="Mural R.J."/>
            <person name="Istrail S."/>
            <person name="Sutton G.G."/>
            <person name="Florea L."/>
            <person name="Halpern A.L."/>
            <person name="Mobarry C.M."/>
            <person name="Lippert R."/>
            <person name="Walenz B."/>
            <person name="Shatkay H."/>
            <person name="Dew I."/>
            <person name="Miller J.R."/>
            <person name="Flanigan M.J."/>
            <person name="Edwards N.J."/>
            <person name="Bolanos R."/>
            <person name="Fasulo D."/>
            <person name="Halldorsson B.V."/>
            <person name="Hannenhalli S."/>
            <person name="Turner R."/>
            <person name="Yooseph S."/>
            <person name="Lu F."/>
            <person name="Nusskern D.R."/>
            <person name="Shue B.C."/>
            <person name="Zheng X.H."/>
            <person name="Zhong F."/>
            <person name="Delcher A.L."/>
            <person name="Huson D.H."/>
            <person name="Kravitz S.A."/>
            <person name="Mouchard L."/>
            <person name="Reinert K."/>
            <person name="Remington K.A."/>
            <person name="Clark A.G."/>
            <person name="Waterman M.S."/>
            <person name="Eichler E.E."/>
            <person name="Adams M.D."/>
            <person name="Hunkapiller M.W."/>
            <person name="Myers E.W."/>
            <person name="Venter J.C."/>
        </authorList>
    </citation>
    <scope>NUCLEOTIDE SEQUENCE [LARGE SCALE GENOMIC DNA]</scope>
</reference>
<reference key="5">
    <citation type="journal article" date="2004" name="Genome Res.">
        <title>The status, quality, and expansion of the NIH full-length cDNA project: the Mammalian Gene Collection (MGC).</title>
        <authorList>
            <consortium name="The MGC Project Team"/>
        </authorList>
    </citation>
    <scope>NUCLEOTIDE SEQUENCE [LARGE SCALE MRNA] (ISOFORM 2)</scope>
    <source>
        <tissue>Prostate</tissue>
    </source>
</reference>
<reference key="6">
    <citation type="journal article" date="1997" name="J. Biol. Chem.">
        <title>Molecular cloning and characterization of a cDNA encoding the third putative mammalian hyaluronan synthase.</title>
        <authorList>
            <person name="Spicer A.P."/>
            <person name="Olson J.S."/>
            <person name="McDonald J.A."/>
        </authorList>
    </citation>
    <scope>NUCLEOTIDE SEQUENCE [GENOMIC DNA] OF 275-464</scope>
</reference>
<reference key="7">
    <citation type="journal article" date="2013" name="J. Biol. Chem.">
        <title>Hyaluronan synthase 1 (HAS1) requires higher cellular UDP-GlcNAc concentration than HAS2 and HAS3.</title>
        <authorList>
            <person name="Rilla K."/>
            <person name="Oikari S."/>
            <person name="Jokela T.A."/>
            <person name="Hyttinen J.M."/>
            <person name="Kaernae R."/>
            <person name="Tammi R.H."/>
            <person name="Tammi M.I."/>
        </authorList>
    </citation>
    <scope>FUNCTION</scope>
    <scope>CATALYTIC ACTIVITY</scope>
    <scope>ACTIVITY REGULATION</scope>
</reference>
<reference key="8">
    <citation type="journal article" date="2015" name="J. Biol. Chem.">
        <title>Fluorescence resonance energy transfer (FRET) and proximity ligation assays reveal functionally relevant homo- and heteromeric complexes among hyaluronan synthases HAS1, HAS2, and HAS3.</title>
        <authorList>
            <person name="Bart G."/>
            <person name="Vico N.O."/>
            <person name="Hassinen A."/>
            <person name="Pujol F.M."/>
            <person name="Deen A.J."/>
            <person name="Ruusala A."/>
            <person name="Tammi R.H."/>
            <person name="Squire A."/>
            <person name="Heldin P."/>
            <person name="Kellokumpu S."/>
            <person name="Tammi M.I."/>
        </authorList>
    </citation>
    <scope>SUBUNIT</scope>
    <scope>INTERACTION WITH HAS1 AND HAS2</scope>
    <scope>SUBCELLULAR LOCATION</scope>
    <scope>CATALYTIC ACTIVITY</scope>
    <scope>FUNCTION</scope>
</reference>
<reference key="9">
    <citation type="journal article" date="2016" name="Cell. Mol. Life Sci.">
        <title>UDP-sugar substrates of HAS3 regulate its O-GlcNAcylation, intracellular traffic, extracellular shedding and correlate with melanoma progression.</title>
        <authorList>
            <person name="Deen A.J."/>
            <person name="Arasu U.T."/>
            <person name="Pasonen-Seppaenen S."/>
            <person name="Hassinen A."/>
            <person name="Takabe P."/>
            <person name="Wojciechowski S."/>
            <person name="Kaernae R."/>
            <person name="Rilla K."/>
            <person name="Kellokumpu S."/>
            <person name="Tammi R."/>
            <person name="Tammi M."/>
            <person name="Oikari S."/>
        </authorList>
    </citation>
    <scope>SUBCELLULAR LOCATION</scope>
    <scope>FUNCTION</scope>
    <scope>CATALYTIC ACTIVITY</scope>
    <scope>ACTIVITY REGULATION</scope>
    <scope>GLYCOSYLATION</scope>
</reference>
<reference key="10">
    <citation type="journal article" date="2019" name="Matrix Biol.">
        <title>Effects of mutations in the post-translational modification sites on the trafficking of hyaluronan synthase 2 (HAS2).</title>
        <authorList>
            <person name="Melero-Fernandez de Mera R.M."/>
            <person name="Arasu U.T."/>
            <person name="Kaernae R."/>
            <person name="Oikari S."/>
            <person name="Rilla K."/>
            <person name="Vigetti D."/>
            <person name="Passi A."/>
            <person name="Heldin P."/>
            <person name="Tammi M.I."/>
            <person name="Deen A.J."/>
        </authorList>
    </citation>
    <scope>SUBCELLULAR LOCATION</scope>
</reference>
<gene>
    <name evidence="9" type="primary">HAS3</name>
</gene>
<organism>
    <name type="scientific">Homo sapiens</name>
    <name type="common">Human</name>
    <dbReference type="NCBI Taxonomy" id="9606"/>
    <lineage>
        <taxon>Eukaryota</taxon>
        <taxon>Metazoa</taxon>
        <taxon>Chordata</taxon>
        <taxon>Craniata</taxon>
        <taxon>Vertebrata</taxon>
        <taxon>Euteleostomi</taxon>
        <taxon>Mammalia</taxon>
        <taxon>Eutheria</taxon>
        <taxon>Euarchontoglires</taxon>
        <taxon>Primates</taxon>
        <taxon>Haplorrhini</taxon>
        <taxon>Catarrhini</taxon>
        <taxon>Hominidae</taxon>
        <taxon>Homo</taxon>
    </lineage>
</organism>
<dbReference type="EC" id="2.4.1.212" evidence="3 4 5"/>
<dbReference type="EMBL" id="AF232772">
    <property type="protein sequence ID" value="AAF36984.1"/>
    <property type="molecule type" value="mRNA"/>
</dbReference>
<dbReference type="EMBL" id="AK291400">
    <property type="protein sequence ID" value="BAF84089.1"/>
    <property type="molecule type" value="mRNA"/>
</dbReference>
<dbReference type="EMBL" id="AC009027">
    <property type="status" value="NOT_ANNOTATED_CDS"/>
    <property type="molecule type" value="Genomic_DNA"/>
</dbReference>
<dbReference type="EMBL" id="CH471092">
    <property type="protein sequence ID" value="EAW83247.1"/>
    <property type="molecule type" value="Genomic_DNA"/>
</dbReference>
<dbReference type="EMBL" id="CH471092">
    <property type="protein sequence ID" value="EAW83248.1"/>
    <property type="molecule type" value="Genomic_DNA"/>
</dbReference>
<dbReference type="EMBL" id="BC021853">
    <property type="protein sequence ID" value="AAH21853.1"/>
    <property type="molecule type" value="mRNA"/>
</dbReference>
<dbReference type="EMBL" id="U86409">
    <property type="protein sequence ID" value="AAC51209.1"/>
    <property type="molecule type" value="Genomic_DNA"/>
</dbReference>
<dbReference type="CCDS" id="CCDS10870.1">
    <molecule id="O00219-2"/>
</dbReference>
<dbReference type="CCDS" id="CCDS10871.1">
    <molecule id="O00219-1"/>
</dbReference>
<dbReference type="RefSeq" id="NP_001186209.1">
    <molecule id="O00219-1"/>
    <property type="nucleotide sequence ID" value="NM_001199280.2"/>
</dbReference>
<dbReference type="RefSeq" id="NP_005320.2">
    <molecule id="O00219-1"/>
    <property type="nucleotide sequence ID" value="NM_005329.2"/>
</dbReference>
<dbReference type="RefSeq" id="NP_619515.1">
    <molecule id="O00219-2"/>
    <property type="nucleotide sequence ID" value="NM_138612.3"/>
</dbReference>
<dbReference type="RefSeq" id="XP_005255978.1">
    <molecule id="O00219-1"/>
    <property type="nucleotide sequence ID" value="XM_005255921.3"/>
</dbReference>
<dbReference type="RefSeq" id="XP_011521363.1">
    <molecule id="O00219-1"/>
    <property type="nucleotide sequence ID" value="XM_011523061.3"/>
</dbReference>
<dbReference type="RefSeq" id="XP_047290001.1">
    <molecule id="O00219-1"/>
    <property type="nucleotide sequence ID" value="XM_047434045.1"/>
</dbReference>
<dbReference type="RefSeq" id="XP_047290002.1">
    <molecule id="O00219-1"/>
    <property type="nucleotide sequence ID" value="XM_047434046.1"/>
</dbReference>
<dbReference type="RefSeq" id="XP_047290003.1">
    <molecule id="O00219-1"/>
    <property type="nucleotide sequence ID" value="XM_047434047.1"/>
</dbReference>
<dbReference type="RefSeq" id="XP_054236175.1">
    <molecule id="O00219-1"/>
    <property type="nucleotide sequence ID" value="XM_054380200.1"/>
</dbReference>
<dbReference type="RefSeq" id="XP_054236176.1">
    <molecule id="O00219-1"/>
    <property type="nucleotide sequence ID" value="XM_054380201.1"/>
</dbReference>
<dbReference type="RefSeq" id="XP_054236177.1">
    <molecule id="O00219-1"/>
    <property type="nucleotide sequence ID" value="XM_054380202.1"/>
</dbReference>
<dbReference type="RefSeq" id="XP_054236178.1">
    <molecule id="O00219-1"/>
    <property type="nucleotide sequence ID" value="XM_054380203.1"/>
</dbReference>
<dbReference type="RefSeq" id="XP_054236179.1">
    <molecule id="O00219-1"/>
    <property type="nucleotide sequence ID" value="XM_054380204.1"/>
</dbReference>
<dbReference type="SMR" id="O00219"/>
<dbReference type="BioGRID" id="109288">
    <property type="interactions" value="15"/>
</dbReference>
<dbReference type="ComplexPortal" id="CPX-8410">
    <property type="entry name" value="HAS1-HAS3 hyaluronan biosynthesis complex"/>
</dbReference>
<dbReference type="ComplexPortal" id="CPX-8423">
    <property type="entry name" value="HAS3 hyaluronan biosynthesis complex"/>
</dbReference>
<dbReference type="ComplexPortal" id="CPX-8424">
    <property type="entry name" value="HAS2-HAS3 hyaluronan biosynthesis complex"/>
</dbReference>
<dbReference type="CORUM" id="O00219"/>
<dbReference type="FunCoup" id="O00219">
    <property type="interactions" value="156"/>
</dbReference>
<dbReference type="IntAct" id="O00219">
    <property type="interactions" value="12"/>
</dbReference>
<dbReference type="STRING" id="9606.ENSP00000304440"/>
<dbReference type="CAZy" id="GT2">
    <property type="family name" value="Glycosyltransferase Family 2"/>
</dbReference>
<dbReference type="GlyCosmos" id="O00219">
    <property type="glycosylation" value="1 site, No reported glycans"/>
</dbReference>
<dbReference type="GlyGen" id="O00219">
    <property type="glycosylation" value="2 sites, 1 O-linked glycan (1 site)"/>
</dbReference>
<dbReference type="iPTMnet" id="O00219"/>
<dbReference type="PhosphoSitePlus" id="O00219"/>
<dbReference type="SwissPalm" id="O00219"/>
<dbReference type="BioMuta" id="HAS3"/>
<dbReference type="MassIVE" id="O00219"/>
<dbReference type="PaxDb" id="9606-ENSP00000304440"/>
<dbReference type="PeptideAtlas" id="O00219"/>
<dbReference type="ProteomicsDB" id="47788">
    <molecule id="O00219-1"/>
</dbReference>
<dbReference type="ProteomicsDB" id="47789">
    <molecule id="O00219-2"/>
</dbReference>
<dbReference type="Antibodypedia" id="29818">
    <property type="antibodies" value="264 antibodies from 32 providers"/>
</dbReference>
<dbReference type="DNASU" id="3038"/>
<dbReference type="Ensembl" id="ENST00000219322.7">
    <molecule id="O00219-2"/>
    <property type="protein sequence ID" value="ENSP00000219322.3"/>
    <property type="gene ID" value="ENSG00000103044.11"/>
</dbReference>
<dbReference type="Ensembl" id="ENST00000306560.1">
    <molecule id="O00219-1"/>
    <property type="protein sequence ID" value="ENSP00000304440.1"/>
    <property type="gene ID" value="ENSG00000103044.11"/>
</dbReference>
<dbReference type="Ensembl" id="ENST00000569188.6">
    <molecule id="O00219-1"/>
    <property type="protein sequence ID" value="ENSP00000454731.1"/>
    <property type="gene ID" value="ENSG00000103044.11"/>
</dbReference>
<dbReference type="GeneID" id="3038"/>
<dbReference type="KEGG" id="hsa:3038"/>
<dbReference type="MANE-Select" id="ENST00000569188.6">
    <property type="protein sequence ID" value="ENSP00000454731.1"/>
    <property type="RefSeq nucleotide sequence ID" value="NM_001199280.2"/>
    <property type="RefSeq protein sequence ID" value="NP_001186209.1"/>
</dbReference>
<dbReference type="UCSC" id="uc002ewk.4">
    <molecule id="O00219-1"/>
    <property type="organism name" value="human"/>
</dbReference>
<dbReference type="AGR" id="HGNC:4820"/>
<dbReference type="CTD" id="3038"/>
<dbReference type="DisGeNET" id="3038"/>
<dbReference type="GeneCards" id="HAS3"/>
<dbReference type="HGNC" id="HGNC:4820">
    <property type="gene designation" value="HAS3"/>
</dbReference>
<dbReference type="HPA" id="ENSG00000103044">
    <property type="expression patterns" value="Tissue enhanced (esophagus, urinary bladder)"/>
</dbReference>
<dbReference type="MIM" id="602428">
    <property type="type" value="gene"/>
</dbReference>
<dbReference type="neXtProt" id="NX_O00219"/>
<dbReference type="OpenTargets" id="ENSG00000103044"/>
<dbReference type="PharmGKB" id="PA29196"/>
<dbReference type="VEuPathDB" id="HostDB:ENSG00000103044"/>
<dbReference type="eggNOG" id="KOG2571">
    <property type="taxonomic scope" value="Eukaryota"/>
</dbReference>
<dbReference type="GeneTree" id="ENSGT00390000010337"/>
<dbReference type="HOGENOM" id="CLU_029695_3_0_1"/>
<dbReference type="InParanoid" id="O00219"/>
<dbReference type="OMA" id="HTEQHYL"/>
<dbReference type="OrthoDB" id="9876900at2759"/>
<dbReference type="PAN-GO" id="O00219">
    <property type="GO annotations" value="5 GO annotations based on evolutionary models"/>
</dbReference>
<dbReference type="PhylomeDB" id="O00219"/>
<dbReference type="TreeFam" id="TF332506"/>
<dbReference type="BRENDA" id="2.4.1.212">
    <property type="organism ID" value="2681"/>
</dbReference>
<dbReference type="PathwayCommons" id="O00219"/>
<dbReference type="Reactome" id="R-HSA-2142850">
    <property type="pathway name" value="Hyaluronan biosynthesis and export"/>
</dbReference>
<dbReference type="SignaLink" id="O00219"/>
<dbReference type="UniPathway" id="UPA00341"/>
<dbReference type="BioGRID-ORCS" id="3038">
    <property type="hits" value="18 hits in 1147 CRISPR screens"/>
</dbReference>
<dbReference type="ChiTaRS" id="HAS3">
    <property type="organism name" value="human"/>
</dbReference>
<dbReference type="GeneWiki" id="HAS3"/>
<dbReference type="GenomeRNAi" id="3038"/>
<dbReference type="Pharos" id="O00219">
    <property type="development level" value="Tbio"/>
</dbReference>
<dbReference type="PRO" id="PR:O00219"/>
<dbReference type="Proteomes" id="UP000005640">
    <property type="component" value="Chromosome 16"/>
</dbReference>
<dbReference type="RNAct" id="O00219">
    <property type="molecule type" value="protein"/>
</dbReference>
<dbReference type="Bgee" id="ENSG00000103044">
    <property type="expression patterns" value="Expressed in secondary oocyte and 141 other cell types or tissues"/>
</dbReference>
<dbReference type="ExpressionAtlas" id="O00219">
    <property type="expression patterns" value="baseline and differential"/>
</dbReference>
<dbReference type="GO" id="GO:0005769">
    <property type="term" value="C:early endosome"/>
    <property type="evidence" value="ECO:0007669"/>
    <property type="project" value="UniProtKB-SubCell"/>
</dbReference>
<dbReference type="GO" id="GO:0005794">
    <property type="term" value="C:Golgi apparatus"/>
    <property type="evidence" value="ECO:0000314"/>
    <property type="project" value="UniProtKB"/>
</dbReference>
<dbReference type="GO" id="GO:0000139">
    <property type="term" value="C:Golgi membrane"/>
    <property type="evidence" value="ECO:0007669"/>
    <property type="project" value="UniProtKB-SubCell"/>
</dbReference>
<dbReference type="GO" id="GO:0036117">
    <property type="term" value="C:hyaluranon cable"/>
    <property type="evidence" value="ECO:0000314"/>
    <property type="project" value="UniProtKB"/>
</dbReference>
<dbReference type="GO" id="GO:0016020">
    <property type="term" value="C:membrane"/>
    <property type="evidence" value="ECO:0000304"/>
    <property type="project" value="ProtInc"/>
</dbReference>
<dbReference type="GO" id="GO:0005634">
    <property type="term" value="C:nucleus"/>
    <property type="evidence" value="ECO:0007669"/>
    <property type="project" value="Ensembl"/>
</dbReference>
<dbReference type="GO" id="GO:0005886">
    <property type="term" value="C:plasma membrane"/>
    <property type="evidence" value="ECO:0000314"/>
    <property type="project" value="UniProtKB"/>
</dbReference>
<dbReference type="GO" id="GO:0050501">
    <property type="term" value="F:hyaluronan synthase activity"/>
    <property type="evidence" value="ECO:0000314"/>
    <property type="project" value="UniProtKB"/>
</dbReference>
<dbReference type="GO" id="GO:0042802">
    <property type="term" value="F:identical protein binding"/>
    <property type="evidence" value="ECO:0000353"/>
    <property type="project" value="IntAct"/>
</dbReference>
<dbReference type="GO" id="GO:0005975">
    <property type="term" value="P:carbohydrate metabolic process"/>
    <property type="evidence" value="ECO:0000304"/>
    <property type="project" value="ProtInc"/>
</dbReference>
<dbReference type="GO" id="GO:0085029">
    <property type="term" value="P:extracellular matrix assembly"/>
    <property type="evidence" value="ECO:0000250"/>
    <property type="project" value="UniProtKB"/>
</dbReference>
<dbReference type="GO" id="GO:0030213">
    <property type="term" value="P:hyaluronan biosynthetic process"/>
    <property type="evidence" value="ECO:0000314"/>
    <property type="project" value="UniProtKB"/>
</dbReference>
<dbReference type="GO" id="GO:0000271">
    <property type="term" value="P:polysaccharide biosynthetic process"/>
    <property type="evidence" value="ECO:0000250"/>
    <property type="project" value="UniProtKB"/>
</dbReference>
<dbReference type="GO" id="GO:0045893">
    <property type="term" value="P:positive regulation of DNA-templated transcription"/>
    <property type="evidence" value="ECO:0000314"/>
    <property type="project" value="UniProtKB"/>
</dbReference>
<dbReference type="GO" id="GO:1900106">
    <property type="term" value="P:positive regulation of hyaluranon cable assembly"/>
    <property type="evidence" value="ECO:0000314"/>
    <property type="project" value="UniProtKB"/>
</dbReference>
<dbReference type="CDD" id="cd06434">
    <property type="entry name" value="GT2_HAS"/>
    <property type="match status" value="1"/>
</dbReference>
<dbReference type="Gene3D" id="3.90.550.10">
    <property type="entry name" value="Spore Coat Polysaccharide Biosynthesis Protein SpsA, Chain A"/>
    <property type="match status" value="1"/>
</dbReference>
<dbReference type="InterPro" id="IPR029044">
    <property type="entry name" value="Nucleotide-diphossugar_trans"/>
</dbReference>
<dbReference type="PANTHER" id="PTHR22913">
    <property type="entry name" value="HYALURONAN SYNTHASE"/>
    <property type="match status" value="1"/>
</dbReference>
<dbReference type="PANTHER" id="PTHR22913:SF6">
    <property type="entry name" value="HYALURONAN SYNTHASE 3"/>
    <property type="match status" value="1"/>
</dbReference>
<dbReference type="Pfam" id="PF13641">
    <property type="entry name" value="Glyco_tranf_2_3"/>
    <property type="match status" value="1"/>
</dbReference>
<dbReference type="SUPFAM" id="SSF53448">
    <property type="entry name" value="Nucleotide-diphospho-sugar transferases"/>
    <property type="match status" value="1"/>
</dbReference>
<evidence type="ECO:0000250" key="1">
    <source>
        <dbReference type="UniProtKB" id="O08650"/>
    </source>
</evidence>
<evidence type="ECO:0000255" key="2"/>
<evidence type="ECO:0000269" key="3">
    <source>
    </source>
</evidence>
<evidence type="ECO:0000269" key="4">
    <source>
    </source>
</evidence>
<evidence type="ECO:0000269" key="5">
    <source>
    </source>
</evidence>
<evidence type="ECO:0000269" key="6">
    <source>
    </source>
</evidence>
<evidence type="ECO:0000303" key="7">
    <source>
    </source>
</evidence>
<evidence type="ECO:0000305" key="8"/>
<evidence type="ECO:0000312" key="9">
    <source>
        <dbReference type="HGNC" id="HGNC:4820"/>
    </source>
</evidence>
<feature type="chain" id="PRO_0000197178" description="Hyaluronan synthase 3">
    <location>
        <begin position="1"/>
        <end position="553"/>
    </location>
</feature>
<feature type="topological domain" description="Cytoplasmic" evidence="2">
    <location>
        <begin position="1"/>
        <end position="15"/>
    </location>
</feature>
<feature type="transmembrane region" description="Helical; Name=1" evidence="2">
    <location>
        <begin position="16"/>
        <end position="36"/>
    </location>
</feature>
<feature type="topological domain" description="Extracellular" evidence="2">
    <location>
        <begin position="37"/>
        <end position="44"/>
    </location>
</feature>
<feature type="transmembrane region" description="Helical; Name=2" evidence="2">
    <location>
        <begin position="45"/>
        <end position="65"/>
    </location>
</feature>
<feature type="topological domain" description="Cytoplasmic" evidence="2">
    <location>
        <begin position="66"/>
        <end position="377"/>
    </location>
</feature>
<feature type="transmembrane region" description="Helical; Name=3" evidence="2">
    <location>
        <begin position="378"/>
        <end position="398"/>
    </location>
</feature>
<feature type="topological domain" description="Extracellular" evidence="2">
    <location>
        <begin position="399"/>
        <end position="408"/>
    </location>
</feature>
<feature type="transmembrane region" description="Helical; Name=4" evidence="2">
    <location>
        <begin position="409"/>
        <end position="429"/>
    </location>
</feature>
<feature type="topological domain" description="Cytoplasmic" evidence="2">
    <location>
        <begin position="430"/>
        <end position="440"/>
    </location>
</feature>
<feature type="transmembrane region" description="Helical; Name=5" evidence="2">
    <location>
        <begin position="441"/>
        <end position="461"/>
    </location>
</feature>
<feature type="topological domain" description="Extracellular" evidence="2">
    <location>
        <begin position="462"/>
        <end position="473"/>
    </location>
</feature>
<feature type="transmembrane region" description="Helical; Name=6" evidence="2">
    <location>
        <begin position="474"/>
        <end position="494"/>
    </location>
</feature>
<feature type="topological domain" description="Cytoplasmic" evidence="2">
    <location>
        <begin position="495"/>
        <end position="515"/>
    </location>
</feature>
<feature type="transmembrane region" description="Helical; Name=7" evidence="2">
    <location>
        <begin position="516"/>
        <end position="536"/>
    </location>
</feature>
<feature type="topological domain" description="Extracellular" evidence="2">
    <location>
        <begin position="537"/>
        <end position="553"/>
    </location>
</feature>
<feature type="glycosylation site" description="N-linked (GlcNAc...) asparagine" evidence="2">
    <location>
        <position position="462"/>
    </location>
</feature>
<feature type="splice variant" id="VSP_042022" description="In isoform 2." evidence="7">
    <original>ILNKYDSWISFLSSVRYWMAFNVERACQSYFGCVQCISGPLGMYRNSLLQQFLEDWYHQKFLGSKCSFGDDRHLTNRVLSLGYRTKYTARSKCLTETPTKYLRWLNQQTRWSKSYFREWLYNSLWFHKHHLWMTYESVVTGFFPFFLIATVIQLFYRGRIWNILLFLLTVQLVGIIKATYACFLRGNAEMIFMSLYSLLYMSSLLPAKIFAIATINKSGWGTSGRKTIVVNFIGLIPVSIWVAVLLGGLAYTAYCQDLFSETELAFLVSGAILYGCYWVALLMLYLAIIARRCGKKPEQYSLAFAEV</original>
    <variation>PPGKGMAVEDDQVQAAQVRATEAWSVHQRHVSREQ</variation>
    <location>
        <begin position="247"/>
        <end position="553"/>
    </location>
</feature>
<feature type="sequence variant" id="VAR_049317" description="In dbSNP:rs2232229.">
    <original>R</original>
    <variation>H</variation>
    <location>
        <position position="173"/>
    </location>
</feature>
<feature type="sequence conflict" description="In Ref. 1; AAF36984." evidence="8" ref="1">
    <original>G</original>
    <variation>E</variation>
    <location>
        <position position="493"/>
    </location>
</feature>
<proteinExistence type="evidence at protein level"/>
<sequence length="553" mass="62998">MPVQLTTALRVVGTSLFALAVLGGILAAYVTGYQFIHTEKHYLSFGLYGAILGLHLLIQSLFAFLEHRRMRRAGQALKLPSPRRGSVALCIAAYQEDPDYLRKCLRSAQRISFPDLKVVMVVDGNRQEDAYMLDIFHEVLGGTEQAGFFVWRSNFHEAGEGETEASLQEGMDRVRDVVRASTFSCIMQKWGGKREVMYTAFKALGDSVDYIQVCDSDTVLDPACTIEMLRVLEEDPQVGGVGGDVQILNKYDSWISFLSSVRYWMAFNVERACQSYFGCVQCISGPLGMYRNSLLQQFLEDWYHQKFLGSKCSFGDDRHLTNRVLSLGYRTKYTARSKCLTETPTKYLRWLNQQTRWSKSYFREWLYNSLWFHKHHLWMTYESVVTGFFPFFLIATVIQLFYRGRIWNILLFLLTVQLVGIIKATYACFLRGNAEMIFMSLYSLLYMSSLLPAKIFAIATINKSGWGTSGRKTIVVNFIGLIPVSIWVAVLLGGLAYTAYCQDLFSETELAFLVSGAILYGCYWVALLMLYLAIIARRCGKKPEQYSLAFAEV</sequence>
<name>HYAS3_HUMAN</name>
<protein>
    <recommendedName>
        <fullName>Hyaluronan synthase 3</fullName>
        <ecNumber evidence="3 4 5">2.4.1.212</ecNumber>
    </recommendedName>
    <alternativeName>
        <fullName>Hyaluronate synthase 3</fullName>
    </alternativeName>
    <alternativeName>
        <fullName>Hyaluronic acid synthase 3</fullName>
        <shortName>HA synthase 3</shortName>
    </alternativeName>
</protein>
<keyword id="KW-0025">Alternative splicing</keyword>
<keyword id="KW-1003">Cell membrane</keyword>
<keyword id="KW-0967">Endosome</keyword>
<keyword id="KW-0325">Glycoprotein</keyword>
<keyword id="KW-0328">Glycosyltransferase</keyword>
<keyword id="KW-0333">Golgi apparatus</keyword>
<keyword id="KW-0472">Membrane</keyword>
<keyword id="KW-1267">Proteomics identification</keyword>
<keyword id="KW-1185">Reference proteome</keyword>
<keyword id="KW-0808">Transferase</keyword>
<keyword id="KW-0812">Transmembrane</keyword>
<keyword id="KW-1133">Transmembrane helix</keyword>